<protein>
    <recommendedName>
        <fullName evidence="1">UPF0225 protein ETA_15740</fullName>
    </recommendedName>
</protein>
<name>Y1574_ERWT9</name>
<dbReference type="EMBL" id="CU468135">
    <property type="protein sequence ID" value="CAO96620.1"/>
    <property type="molecule type" value="Genomic_DNA"/>
</dbReference>
<dbReference type="RefSeq" id="WP_012441313.1">
    <property type="nucleotide sequence ID" value="NC_010694.1"/>
</dbReference>
<dbReference type="SMR" id="B2VKX1"/>
<dbReference type="KEGG" id="eta:ETA_15740"/>
<dbReference type="eggNOG" id="COG3012">
    <property type="taxonomic scope" value="Bacteria"/>
</dbReference>
<dbReference type="HOGENOM" id="CLU_099590_0_0_6"/>
<dbReference type="OrthoDB" id="21421at2"/>
<dbReference type="Proteomes" id="UP000001726">
    <property type="component" value="Chromosome"/>
</dbReference>
<dbReference type="Gene3D" id="3.10.450.50">
    <property type="match status" value="1"/>
</dbReference>
<dbReference type="HAMAP" id="MF_00612">
    <property type="entry name" value="UPF0225"/>
    <property type="match status" value="1"/>
</dbReference>
<dbReference type="InterPro" id="IPR032710">
    <property type="entry name" value="NTF2-like_dom_sf"/>
</dbReference>
<dbReference type="InterPro" id="IPR004027">
    <property type="entry name" value="SEC_C_motif"/>
</dbReference>
<dbReference type="InterPro" id="IPR023006">
    <property type="entry name" value="UPF0225"/>
</dbReference>
<dbReference type="InterPro" id="IPR048469">
    <property type="entry name" value="YchJ-like_M"/>
</dbReference>
<dbReference type="NCBIfam" id="NF002449">
    <property type="entry name" value="PRK01617.1"/>
    <property type="match status" value="1"/>
</dbReference>
<dbReference type="NCBIfam" id="NF002486">
    <property type="entry name" value="PRK01752.1"/>
    <property type="match status" value="1"/>
</dbReference>
<dbReference type="PANTHER" id="PTHR33747:SF1">
    <property type="entry name" value="ADENYLATE CYCLASE-ASSOCIATED CAP C-TERMINAL DOMAIN-CONTAINING PROTEIN"/>
    <property type="match status" value="1"/>
</dbReference>
<dbReference type="PANTHER" id="PTHR33747">
    <property type="entry name" value="UPF0225 PROTEIN SCO1677"/>
    <property type="match status" value="1"/>
</dbReference>
<dbReference type="Pfam" id="PF02810">
    <property type="entry name" value="SEC-C"/>
    <property type="match status" value="2"/>
</dbReference>
<dbReference type="Pfam" id="PF17775">
    <property type="entry name" value="YchJ_M-like"/>
    <property type="match status" value="1"/>
</dbReference>
<dbReference type="SUPFAM" id="SSF54427">
    <property type="entry name" value="NTF2-like"/>
    <property type="match status" value="1"/>
</dbReference>
<dbReference type="SUPFAM" id="SSF103642">
    <property type="entry name" value="Sec-C motif"/>
    <property type="match status" value="1"/>
</dbReference>
<keyword id="KW-1185">Reference proteome</keyword>
<reference key="1">
    <citation type="journal article" date="2008" name="Environ. Microbiol.">
        <title>The genome of Erwinia tasmaniensis strain Et1/99, a non-pathogenic bacterium in the genus Erwinia.</title>
        <authorList>
            <person name="Kube M."/>
            <person name="Migdoll A.M."/>
            <person name="Mueller I."/>
            <person name="Kuhl H."/>
            <person name="Beck A."/>
            <person name="Reinhardt R."/>
            <person name="Geider K."/>
        </authorList>
    </citation>
    <scope>NUCLEOTIDE SEQUENCE [LARGE SCALE GENOMIC DNA]</scope>
    <source>
        <strain>DSM 17950 / CFBP 7177 / CIP 109463 / NCPPB 4357 / Et1/99</strain>
    </source>
</reference>
<organism>
    <name type="scientific">Erwinia tasmaniensis (strain DSM 17950 / CFBP 7177 / CIP 109463 / NCPPB 4357 / Et1/99)</name>
    <dbReference type="NCBI Taxonomy" id="465817"/>
    <lineage>
        <taxon>Bacteria</taxon>
        <taxon>Pseudomonadati</taxon>
        <taxon>Pseudomonadota</taxon>
        <taxon>Gammaproteobacteria</taxon>
        <taxon>Enterobacterales</taxon>
        <taxon>Erwiniaceae</taxon>
        <taxon>Erwinia</taxon>
    </lineage>
</organism>
<evidence type="ECO:0000255" key="1">
    <source>
        <dbReference type="HAMAP-Rule" id="MF_00612"/>
    </source>
</evidence>
<sequence length="153" mass="17585">MSENCPCGSELQYSVCCGPYLRGGAYPDTPEALMRSRYCAYAQQNLPYLIASWHPSCNAQNFAASLEESFSNTRWHGLRVISTEVLSDQDTGYVTFFARFSENKQQSFLHERSRFLREEQRWYYIDGTFPPTGRNDRCPCGSGKKYKKCCGQH</sequence>
<comment type="similarity">
    <text evidence="1">Belongs to the UPF0225 family.</text>
</comment>
<feature type="chain" id="PRO_1000130385" description="UPF0225 protein ETA_15740">
    <location>
        <begin position="1"/>
        <end position="153"/>
    </location>
</feature>
<gene>
    <name type="ordered locus">ETA_15740</name>
</gene>
<proteinExistence type="inferred from homology"/>
<accession>B2VKX1</accession>